<organism>
    <name type="scientific">Shewanella sp. (strain ANA-3)</name>
    <dbReference type="NCBI Taxonomy" id="94122"/>
    <lineage>
        <taxon>Bacteria</taxon>
        <taxon>Pseudomonadati</taxon>
        <taxon>Pseudomonadota</taxon>
        <taxon>Gammaproteobacteria</taxon>
        <taxon>Alteromonadales</taxon>
        <taxon>Shewanellaceae</taxon>
        <taxon>Shewanella</taxon>
    </lineage>
</organism>
<dbReference type="EC" id="1.3.5.2" evidence="1"/>
<dbReference type="EMBL" id="CP000469">
    <property type="protein sequence ID" value="ABK48019.1"/>
    <property type="molecule type" value="Genomic_DNA"/>
</dbReference>
<dbReference type="RefSeq" id="WP_011716797.1">
    <property type="nucleotide sequence ID" value="NC_008577.1"/>
</dbReference>
<dbReference type="SMR" id="A0KW50"/>
<dbReference type="STRING" id="94122.Shewana3_1786"/>
<dbReference type="KEGG" id="shn:Shewana3_1786"/>
<dbReference type="eggNOG" id="COG0167">
    <property type="taxonomic scope" value="Bacteria"/>
</dbReference>
<dbReference type="HOGENOM" id="CLU_013640_2_0_6"/>
<dbReference type="OrthoDB" id="9802377at2"/>
<dbReference type="UniPathway" id="UPA00070">
    <property type="reaction ID" value="UER00946"/>
</dbReference>
<dbReference type="Proteomes" id="UP000002589">
    <property type="component" value="Chromosome"/>
</dbReference>
<dbReference type="GO" id="GO:0005737">
    <property type="term" value="C:cytoplasm"/>
    <property type="evidence" value="ECO:0007669"/>
    <property type="project" value="InterPro"/>
</dbReference>
<dbReference type="GO" id="GO:0005886">
    <property type="term" value="C:plasma membrane"/>
    <property type="evidence" value="ECO:0007669"/>
    <property type="project" value="UniProtKB-SubCell"/>
</dbReference>
<dbReference type="GO" id="GO:0106430">
    <property type="term" value="F:dihydroorotate dehydrogenase (quinone) activity"/>
    <property type="evidence" value="ECO:0007669"/>
    <property type="project" value="UniProtKB-EC"/>
</dbReference>
<dbReference type="GO" id="GO:0006207">
    <property type="term" value="P:'de novo' pyrimidine nucleobase biosynthetic process"/>
    <property type="evidence" value="ECO:0007669"/>
    <property type="project" value="InterPro"/>
</dbReference>
<dbReference type="GO" id="GO:0044205">
    <property type="term" value="P:'de novo' UMP biosynthetic process"/>
    <property type="evidence" value="ECO:0007669"/>
    <property type="project" value="UniProtKB-UniRule"/>
</dbReference>
<dbReference type="CDD" id="cd04738">
    <property type="entry name" value="DHOD_2_like"/>
    <property type="match status" value="1"/>
</dbReference>
<dbReference type="FunFam" id="3.20.20.70:FF:000028">
    <property type="entry name" value="Dihydroorotate dehydrogenase (quinone)"/>
    <property type="match status" value="1"/>
</dbReference>
<dbReference type="Gene3D" id="3.20.20.70">
    <property type="entry name" value="Aldolase class I"/>
    <property type="match status" value="1"/>
</dbReference>
<dbReference type="HAMAP" id="MF_00225">
    <property type="entry name" value="DHO_dh_type2"/>
    <property type="match status" value="1"/>
</dbReference>
<dbReference type="InterPro" id="IPR013785">
    <property type="entry name" value="Aldolase_TIM"/>
</dbReference>
<dbReference type="InterPro" id="IPR050074">
    <property type="entry name" value="DHO_dehydrogenase"/>
</dbReference>
<dbReference type="InterPro" id="IPR012135">
    <property type="entry name" value="Dihydroorotate_DH_1_2"/>
</dbReference>
<dbReference type="InterPro" id="IPR005719">
    <property type="entry name" value="Dihydroorotate_DH_2"/>
</dbReference>
<dbReference type="InterPro" id="IPR005720">
    <property type="entry name" value="Dihydroorotate_DH_cat"/>
</dbReference>
<dbReference type="InterPro" id="IPR001295">
    <property type="entry name" value="Dihydroorotate_DH_CS"/>
</dbReference>
<dbReference type="NCBIfam" id="NF003644">
    <property type="entry name" value="PRK05286.1-1"/>
    <property type="match status" value="1"/>
</dbReference>
<dbReference type="NCBIfam" id="NF003645">
    <property type="entry name" value="PRK05286.1-2"/>
    <property type="match status" value="1"/>
</dbReference>
<dbReference type="NCBIfam" id="NF003646">
    <property type="entry name" value="PRK05286.1-4"/>
    <property type="match status" value="1"/>
</dbReference>
<dbReference type="NCBIfam" id="NF003652">
    <property type="entry name" value="PRK05286.2-5"/>
    <property type="match status" value="1"/>
</dbReference>
<dbReference type="NCBIfam" id="TIGR01036">
    <property type="entry name" value="pyrD_sub2"/>
    <property type="match status" value="1"/>
</dbReference>
<dbReference type="PANTHER" id="PTHR48109:SF4">
    <property type="entry name" value="DIHYDROOROTATE DEHYDROGENASE (QUINONE), MITOCHONDRIAL"/>
    <property type="match status" value="1"/>
</dbReference>
<dbReference type="PANTHER" id="PTHR48109">
    <property type="entry name" value="DIHYDROOROTATE DEHYDROGENASE (QUINONE), MITOCHONDRIAL-RELATED"/>
    <property type="match status" value="1"/>
</dbReference>
<dbReference type="Pfam" id="PF01180">
    <property type="entry name" value="DHO_dh"/>
    <property type="match status" value="1"/>
</dbReference>
<dbReference type="PIRSF" id="PIRSF000164">
    <property type="entry name" value="DHO_oxidase"/>
    <property type="match status" value="1"/>
</dbReference>
<dbReference type="SUPFAM" id="SSF51395">
    <property type="entry name" value="FMN-linked oxidoreductases"/>
    <property type="match status" value="1"/>
</dbReference>
<dbReference type="PROSITE" id="PS00911">
    <property type="entry name" value="DHODEHASE_1"/>
    <property type="match status" value="1"/>
</dbReference>
<dbReference type="PROSITE" id="PS00912">
    <property type="entry name" value="DHODEHASE_2"/>
    <property type="match status" value="1"/>
</dbReference>
<sequence length="339" mass="36552">MFYKIAQKVMFQMDPERAHNLAIGSLKMTGNSPLNAFYAQNIAPAPVSFMGLTFPNPVGLAAGMDKDGESIDAFHAMGFGHVEVGTVTPRPQPGNDLPRLFRLKPAKAIINRMGFNNKGVDNLVKNLIAKKTDIMVGVNIGKNKDTPVEQGKDDYLICMDKVYPYAAYIAVNISSPNTPGLRSLQYGDLLDELLSALKTKQLELAEKHKKYVPIALKIAPDLTTEEIENIAQSLIKNKFDGAIATNTTLTRDGVSGLANANESGGLSGKPLTELSTKVIKQLATGLNGQIPIIGVGGINSAEDALAKFDAGATMVQIYSGFIYQGPKLIKEIVEAYRLK</sequence>
<proteinExistence type="inferred from homology"/>
<evidence type="ECO:0000255" key="1">
    <source>
        <dbReference type="HAMAP-Rule" id="MF_00225"/>
    </source>
</evidence>
<keyword id="KW-1003">Cell membrane</keyword>
<keyword id="KW-0285">Flavoprotein</keyword>
<keyword id="KW-0288">FMN</keyword>
<keyword id="KW-0472">Membrane</keyword>
<keyword id="KW-0560">Oxidoreductase</keyword>
<keyword id="KW-0665">Pyrimidine biosynthesis</keyword>
<gene>
    <name evidence="1" type="primary">pyrD</name>
    <name type="ordered locus">Shewana3_1786</name>
</gene>
<accession>A0KW50</accession>
<comment type="function">
    <text evidence="1">Catalyzes the conversion of dihydroorotate to orotate with quinone as electron acceptor.</text>
</comment>
<comment type="catalytic activity">
    <reaction evidence="1">
        <text>(S)-dihydroorotate + a quinone = orotate + a quinol</text>
        <dbReference type="Rhea" id="RHEA:30187"/>
        <dbReference type="ChEBI" id="CHEBI:24646"/>
        <dbReference type="ChEBI" id="CHEBI:30839"/>
        <dbReference type="ChEBI" id="CHEBI:30864"/>
        <dbReference type="ChEBI" id="CHEBI:132124"/>
        <dbReference type="EC" id="1.3.5.2"/>
    </reaction>
</comment>
<comment type="cofactor">
    <cofactor evidence="1">
        <name>FMN</name>
        <dbReference type="ChEBI" id="CHEBI:58210"/>
    </cofactor>
    <text evidence="1">Binds 1 FMN per subunit.</text>
</comment>
<comment type="pathway">
    <text evidence="1">Pyrimidine metabolism; UMP biosynthesis via de novo pathway; orotate from (S)-dihydroorotate (quinone route): step 1/1.</text>
</comment>
<comment type="subunit">
    <text evidence="1">Monomer.</text>
</comment>
<comment type="subcellular location">
    <subcellularLocation>
        <location evidence="1">Cell membrane</location>
        <topology evidence="1">Peripheral membrane protein</topology>
    </subcellularLocation>
</comment>
<comment type="similarity">
    <text evidence="1">Belongs to the dihydroorotate dehydrogenase family. Type 2 subfamily.</text>
</comment>
<protein>
    <recommendedName>
        <fullName evidence="1">Dihydroorotate dehydrogenase (quinone)</fullName>
        <ecNumber evidence="1">1.3.5.2</ecNumber>
    </recommendedName>
    <alternativeName>
        <fullName evidence="1">DHOdehase</fullName>
        <shortName evidence="1">DHOD</shortName>
        <shortName evidence="1">DHODase</shortName>
    </alternativeName>
    <alternativeName>
        <fullName evidence="1">Dihydroorotate oxidase</fullName>
    </alternativeName>
</protein>
<name>PYRD_SHESA</name>
<reference key="1">
    <citation type="submission" date="2006-09" db="EMBL/GenBank/DDBJ databases">
        <title>Complete sequence of chromosome 1 of Shewanella sp. ANA-3.</title>
        <authorList>
            <person name="Copeland A."/>
            <person name="Lucas S."/>
            <person name="Lapidus A."/>
            <person name="Barry K."/>
            <person name="Detter J.C."/>
            <person name="Glavina del Rio T."/>
            <person name="Hammon N."/>
            <person name="Israni S."/>
            <person name="Dalin E."/>
            <person name="Tice H."/>
            <person name="Pitluck S."/>
            <person name="Chertkov O."/>
            <person name="Brettin T."/>
            <person name="Bruce D."/>
            <person name="Han C."/>
            <person name="Tapia R."/>
            <person name="Gilna P."/>
            <person name="Schmutz J."/>
            <person name="Larimer F."/>
            <person name="Land M."/>
            <person name="Hauser L."/>
            <person name="Kyrpides N."/>
            <person name="Kim E."/>
            <person name="Newman D."/>
            <person name="Salticov C."/>
            <person name="Konstantinidis K."/>
            <person name="Klappenback J."/>
            <person name="Tiedje J."/>
            <person name="Richardson P."/>
        </authorList>
    </citation>
    <scope>NUCLEOTIDE SEQUENCE [LARGE SCALE GENOMIC DNA]</scope>
    <source>
        <strain>ANA-3</strain>
    </source>
</reference>
<feature type="chain" id="PRO_1000024226" description="Dihydroorotate dehydrogenase (quinone)">
    <location>
        <begin position="1"/>
        <end position="339"/>
    </location>
</feature>
<feature type="active site" description="Nucleophile" evidence="1">
    <location>
        <position position="175"/>
    </location>
</feature>
<feature type="binding site" evidence="1">
    <location>
        <begin position="62"/>
        <end position="66"/>
    </location>
    <ligand>
        <name>FMN</name>
        <dbReference type="ChEBI" id="CHEBI:58210"/>
    </ligand>
</feature>
<feature type="binding site" evidence="1">
    <location>
        <position position="66"/>
    </location>
    <ligand>
        <name>substrate</name>
    </ligand>
</feature>
<feature type="binding site" evidence="1">
    <location>
        <position position="86"/>
    </location>
    <ligand>
        <name>FMN</name>
        <dbReference type="ChEBI" id="CHEBI:58210"/>
    </ligand>
</feature>
<feature type="binding site" evidence="1">
    <location>
        <begin position="111"/>
        <end position="115"/>
    </location>
    <ligand>
        <name>substrate</name>
    </ligand>
</feature>
<feature type="binding site" evidence="1">
    <location>
        <position position="139"/>
    </location>
    <ligand>
        <name>FMN</name>
        <dbReference type="ChEBI" id="CHEBI:58210"/>
    </ligand>
</feature>
<feature type="binding site" evidence="1">
    <location>
        <position position="172"/>
    </location>
    <ligand>
        <name>FMN</name>
        <dbReference type="ChEBI" id="CHEBI:58210"/>
    </ligand>
</feature>
<feature type="binding site" evidence="1">
    <location>
        <position position="172"/>
    </location>
    <ligand>
        <name>substrate</name>
    </ligand>
</feature>
<feature type="binding site" evidence="1">
    <location>
        <position position="177"/>
    </location>
    <ligand>
        <name>substrate</name>
    </ligand>
</feature>
<feature type="binding site" evidence="1">
    <location>
        <position position="217"/>
    </location>
    <ligand>
        <name>FMN</name>
        <dbReference type="ChEBI" id="CHEBI:58210"/>
    </ligand>
</feature>
<feature type="binding site" evidence="1">
    <location>
        <position position="245"/>
    </location>
    <ligand>
        <name>FMN</name>
        <dbReference type="ChEBI" id="CHEBI:58210"/>
    </ligand>
</feature>
<feature type="binding site" evidence="1">
    <location>
        <begin position="246"/>
        <end position="247"/>
    </location>
    <ligand>
        <name>substrate</name>
    </ligand>
</feature>
<feature type="binding site" evidence="1">
    <location>
        <position position="268"/>
    </location>
    <ligand>
        <name>FMN</name>
        <dbReference type="ChEBI" id="CHEBI:58210"/>
    </ligand>
</feature>
<feature type="binding site" evidence="1">
    <location>
        <position position="297"/>
    </location>
    <ligand>
        <name>FMN</name>
        <dbReference type="ChEBI" id="CHEBI:58210"/>
    </ligand>
</feature>
<feature type="binding site" evidence="1">
    <location>
        <begin position="318"/>
        <end position="319"/>
    </location>
    <ligand>
        <name>FMN</name>
        <dbReference type="ChEBI" id="CHEBI:58210"/>
    </ligand>
</feature>